<gene>
    <name evidence="1" type="primary">kdpB</name>
    <name type="ordered locus">EcE24377A_0723</name>
</gene>
<organism>
    <name type="scientific">Escherichia coli O139:H28 (strain E24377A / ETEC)</name>
    <dbReference type="NCBI Taxonomy" id="331111"/>
    <lineage>
        <taxon>Bacteria</taxon>
        <taxon>Pseudomonadati</taxon>
        <taxon>Pseudomonadota</taxon>
        <taxon>Gammaproteobacteria</taxon>
        <taxon>Enterobacterales</taxon>
        <taxon>Enterobacteriaceae</taxon>
        <taxon>Escherichia</taxon>
    </lineage>
</organism>
<sequence length="682" mass="72238">MSRKQLALFEPTLVVQALKEAVKKLNPQAQWRNPVMFIVWIGSLLTTCISIAMASGAMPGNALFSAAISGWLWVTVLFANFAEALAEGRSKAQANSLKGVKKTAFARKLREPKYGAAADKVPADQLRKGDIVLVEAGDIIPCDGEVIEGGASVDESAITGESAPVIRESGGDFASVTGGTRILSDWLVIECSVNPGETFLDRMIAMVEGAQRRKTPNEIALTILLIALTIVFLLATATLWPFSAWGGNAVSVTVLVALLVCLIPTTIGGLLSAIGVAGMSRMLGANVIATSGRAVEAAGDVDVLLLDKTGTITLGNRQASEFIPAQGVDEKTLADAAQLASLADETPEGRSIVILAKQRFNLRERDVQSLHATFVPFTAQSRMSGINIDNRMIRKGSVDAIRRHVEANGGHFPTDVDQKVDQVARQGATPLVVVEGSRVLGVIALKDIVKGGIKERFAQLRKMGIKTVMITGDNRLTAAAIAAEAGVDDFLAEATPEAKLALIRQYQAEGRLVAMTGDGTNDAPALAQADVAVAMNSGTQAAKEAGNMVDLDSNPTKLIEVVHIGKQMLMTRGSLTTFSIANDVAKYFAIIPAAFAATYPQLNALNIMRLHSPDSAILSAVIFNALIIVFLIPLALKGVSYKPLTASAMLRRNLWIYGLGGLLVPFIGIKVIDLLLTVCGLV</sequence>
<name>KDPB_ECO24</name>
<reference key="1">
    <citation type="journal article" date="2008" name="J. Bacteriol.">
        <title>The pangenome structure of Escherichia coli: comparative genomic analysis of E. coli commensal and pathogenic isolates.</title>
        <authorList>
            <person name="Rasko D.A."/>
            <person name="Rosovitz M.J."/>
            <person name="Myers G.S.A."/>
            <person name="Mongodin E.F."/>
            <person name="Fricke W.F."/>
            <person name="Gajer P."/>
            <person name="Crabtree J."/>
            <person name="Sebaihia M."/>
            <person name="Thomson N.R."/>
            <person name="Chaudhuri R."/>
            <person name="Henderson I.R."/>
            <person name="Sperandio V."/>
            <person name="Ravel J."/>
        </authorList>
    </citation>
    <scope>NUCLEOTIDE SEQUENCE [LARGE SCALE GENOMIC DNA]</scope>
    <source>
        <strain>E24377A / ETEC</strain>
    </source>
</reference>
<evidence type="ECO:0000255" key="1">
    <source>
        <dbReference type="HAMAP-Rule" id="MF_00285"/>
    </source>
</evidence>
<comment type="function">
    <text evidence="1">Part of the high-affinity ATP-driven potassium transport (or Kdp) system, which catalyzes the hydrolysis of ATP coupled with the electrogenic transport of potassium into the cytoplasm. This subunit is responsible for energy coupling to the transport system and for the release of the potassium ions to the cytoplasm.</text>
</comment>
<comment type="catalytic activity">
    <reaction evidence="1">
        <text>K(+)(out) + ATP + H2O = K(+)(in) + ADP + phosphate + H(+)</text>
        <dbReference type="Rhea" id="RHEA:16777"/>
        <dbReference type="ChEBI" id="CHEBI:15377"/>
        <dbReference type="ChEBI" id="CHEBI:15378"/>
        <dbReference type="ChEBI" id="CHEBI:29103"/>
        <dbReference type="ChEBI" id="CHEBI:30616"/>
        <dbReference type="ChEBI" id="CHEBI:43474"/>
        <dbReference type="ChEBI" id="CHEBI:456216"/>
        <dbReference type="EC" id="7.2.2.6"/>
    </reaction>
    <physiologicalReaction direction="left-to-right" evidence="1">
        <dbReference type="Rhea" id="RHEA:16778"/>
    </physiologicalReaction>
</comment>
<comment type="subunit">
    <text evidence="1">The system is composed of three essential subunits: KdpA, KdpB and KdpC.</text>
</comment>
<comment type="subcellular location">
    <subcellularLocation>
        <location evidence="1">Cell inner membrane</location>
        <topology evidence="1">Multi-pass membrane protein</topology>
    </subcellularLocation>
</comment>
<comment type="similarity">
    <text evidence="1">Belongs to the cation transport ATPase (P-type) (TC 3.A.3) family. Type IA subfamily.</text>
</comment>
<keyword id="KW-0067">ATP-binding</keyword>
<keyword id="KW-0997">Cell inner membrane</keyword>
<keyword id="KW-1003">Cell membrane</keyword>
<keyword id="KW-0406">Ion transport</keyword>
<keyword id="KW-0460">Magnesium</keyword>
<keyword id="KW-0472">Membrane</keyword>
<keyword id="KW-0479">Metal-binding</keyword>
<keyword id="KW-0547">Nucleotide-binding</keyword>
<keyword id="KW-0597">Phosphoprotein</keyword>
<keyword id="KW-0630">Potassium</keyword>
<keyword id="KW-0633">Potassium transport</keyword>
<keyword id="KW-1185">Reference proteome</keyword>
<keyword id="KW-1278">Translocase</keyword>
<keyword id="KW-0812">Transmembrane</keyword>
<keyword id="KW-1133">Transmembrane helix</keyword>
<keyword id="KW-0813">Transport</keyword>
<feature type="chain" id="PRO_1000059250" description="Potassium-transporting ATPase ATP-binding subunit">
    <location>
        <begin position="1"/>
        <end position="682"/>
    </location>
</feature>
<feature type="transmembrane region" description="Helical" evidence="1">
    <location>
        <begin position="34"/>
        <end position="54"/>
    </location>
</feature>
<feature type="transmembrane region" description="Helical" evidence="1">
    <location>
        <begin position="62"/>
        <end position="82"/>
    </location>
</feature>
<feature type="transmembrane region" description="Helical" evidence="1">
    <location>
        <begin position="219"/>
        <end position="239"/>
    </location>
</feature>
<feature type="transmembrane region" description="Helical" evidence="1">
    <location>
        <begin position="254"/>
        <end position="274"/>
    </location>
</feature>
<feature type="transmembrane region" description="Helical" evidence="1">
    <location>
        <begin position="588"/>
        <end position="608"/>
    </location>
</feature>
<feature type="transmembrane region" description="Helical" evidence="1">
    <location>
        <begin position="616"/>
        <end position="636"/>
    </location>
</feature>
<feature type="transmembrane region" description="Helical" evidence="1">
    <location>
        <begin position="656"/>
        <end position="676"/>
    </location>
</feature>
<feature type="active site" description="4-aspartylphosphate intermediate" evidence="1">
    <location>
        <position position="307"/>
    </location>
</feature>
<feature type="binding site" evidence="1">
    <location>
        <position position="344"/>
    </location>
    <ligand>
        <name>ATP</name>
        <dbReference type="ChEBI" id="CHEBI:30616"/>
    </ligand>
</feature>
<feature type="binding site" evidence="1">
    <location>
        <position position="348"/>
    </location>
    <ligand>
        <name>ATP</name>
        <dbReference type="ChEBI" id="CHEBI:30616"/>
    </ligand>
</feature>
<feature type="binding site" evidence="1">
    <location>
        <begin position="377"/>
        <end position="384"/>
    </location>
    <ligand>
        <name>ATP</name>
        <dbReference type="ChEBI" id="CHEBI:30616"/>
    </ligand>
</feature>
<feature type="binding site" evidence="1">
    <location>
        <position position="395"/>
    </location>
    <ligand>
        <name>ATP</name>
        <dbReference type="ChEBI" id="CHEBI:30616"/>
    </ligand>
</feature>
<feature type="binding site" evidence="1">
    <location>
        <position position="518"/>
    </location>
    <ligand>
        <name>Mg(2+)</name>
        <dbReference type="ChEBI" id="CHEBI:18420"/>
    </ligand>
</feature>
<feature type="binding site" evidence="1">
    <location>
        <position position="522"/>
    </location>
    <ligand>
        <name>Mg(2+)</name>
        <dbReference type="ChEBI" id="CHEBI:18420"/>
    </ligand>
</feature>
<protein>
    <recommendedName>
        <fullName evidence="1">Potassium-transporting ATPase ATP-binding subunit</fullName>
        <ecNumber evidence="1">7.2.2.6</ecNumber>
    </recommendedName>
    <alternativeName>
        <fullName evidence="1">ATP phosphohydrolase [potassium-transporting] B chain</fullName>
    </alternativeName>
    <alternativeName>
        <fullName evidence="1">Potassium-binding and translocating subunit B</fullName>
    </alternativeName>
    <alternativeName>
        <fullName evidence="1">Potassium-translocating ATPase B chain</fullName>
    </alternativeName>
</protein>
<dbReference type="EC" id="7.2.2.6" evidence="1"/>
<dbReference type="EMBL" id="CP000800">
    <property type="protein sequence ID" value="ABV20856.1"/>
    <property type="molecule type" value="Genomic_DNA"/>
</dbReference>
<dbReference type="RefSeq" id="WP_000087967.1">
    <property type="nucleotide sequence ID" value="NC_009801.1"/>
</dbReference>
<dbReference type="BMRB" id="A7ZJ80"/>
<dbReference type="SMR" id="A7ZJ80"/>
<dbReference type="GeneID" id="75204950"/>
<dbReference type="KEGG" id="ecw:EcE24377A_0723"/>
<dbReference type="HOGENOM" id="CLU_025728_2_0_6"/>
<dbReference type="Proteomes" id="UP000001122">
    <property type="component" value="Chromosome"/>
</dbReference>
<dbReference type="GO" id="GO:0005886">
    <property type="term" value="C:plasma membrane"/>
    <property type="evidence" value="ECO:0007669"/>
    <property type="project" value="UniProtKB-SubCell"/>
</dbReference>
<dbReference type="GO" id="GO:0005524">
    <property type="term" value="F:ATP binding"/>
    <property type="evidence" value="ECO:0007669"/>
    <property type="project" value="UniProtKB-UniRule"/>
</dbReference>
<dbReference type="GO" id="GO:0016887">
    <property type="term" value="F:ATP hydrolysis activity"/>
    <property type="evidence" value="ECO:0007669"/>
    <property type="project" value="InterPro"/>
</dbReference>
<dbReference type="GO" id="GO:0000287">
    <property type="term" value="F:magnesium ion binding"/>
    <property type="evidence" value="ECO:0007669"/>
    <property type="project" value="UniProtKB-UniRule"/>
</dbReference>
<dbReference type="GO" id="GO:0008556">
    <property type="term" value="F:P-type potassium transmembrane transporter activity"/>
    <property type="evidence" value="ECO:0007669"/>
    <property type="project" value="UniProtKB-UniRule"/>
</dbReference>
<dbReference type="CDD" id="cd02078">
    <property type="entry name" value="P-type_ATPase_K"/>
    <property type="match status" value="1"/>
</dbReference>
<dbReference type="FunFam" id="2.70.150.10:FF:000010">
    <property type="entry name" value="Potassium-transporting ATPase ATP-binding subunit"/>
    <property type="match status" value="1"/>
</dbReference>
<dbReference type="FunFam" id="3.40.1110.10:FF:000007">
    <property type="entry name" value="Potassium-transporting ATPase ATP-binding subunit"/>
    <property type="match status" value="1"/>
</dbReference>
<dbReference type="Gene3D" id="3.40.1110.10">
    <property type="entry name" value="Calcium-transporting ATPase, cytoplasmic domain N"/>
    <property type="match status" value="1"/>
</dbReference>
<dbReference type="Gene3D" id="2.70.150.10">
    <property type="entry name" value="Calcium-transporting ATPase, cytoplasmic transduction domain A"/>
    <property type="match status" value="1"/>
</dbReference>
<dbReference type="Gene3D" id="3.40.50.1000">
    <property type="entry name" value="HAD superfamily/HAD-like"/>
    <property type="match status" value="1"/>
</dbReference>
<dbReference type="HAMAP" id="MF_00285">
    <property type="entry name" value="KdpB"/>
    <property type="match status" value="1"/>
</dbReference>
<dbReference type="InterPro" id="IPR023299">
    <property type="entry name" value="ATPase_P-typ_cyto_dom_N"/>
</dbReference>
<dbReference type="InterPro" id="IPR018303">
    <property type="entry name" value="ATPase_P-typ_P_site"/>
</dbReference>
<dbReference type="InterPro" id="IPR023298">
    <property type="entry name" value="ATPase_P-typ_TM_dom_sf"/>
</dbReference>
<dbReference type="InterPro" id="IPR008250">
    <property type="entry name" value="ATPase_P-typ_transduc_dom_A_sf"/>
</dbReference>
<dbReference type="InterPro" id="IPR036412">
    <property type="entry name" value="HAD-like_sf"/>
</dbReference>
<dbReference type="InterPro" id="IPR023214">
    <property type="entry name" value="HAD_sf"/>
</dbReference>
<dbReference type="InterPro" id="IPR006391">
    <property type="entry name" value="P-type_ATPase_bsu_IA"/>
</dbReference>
<dbReference type="InterPro" id="IPR001757">
    <property type="entry name" value="P_typ_ATPase"/>
</dbReference>
<dbReference type="InterPro" id="IPR044492">
    <property type="entry name" value="P_typ_ATPase_HD_dom"/>
</dbReference>
<dbReference type="NCBIfam" id="TIGR01494">
    <property type="entry name" value="ATPase_P-type"/>
    <property type="match status" value="2"/>
</dbReference>
<dbReference type="NCBIfam" id="TIGR01497">
    <property type="entry name" value="kdpB"/>
    <property type="match status" value="1"/>
</dbReference>
<dbReference type="PANTHER" id="PTHR43743">
    <property type="entry name" value="POTASSIUM-TRANSPORTING ATPASE ATP-BINDING SUBUNIT"/>
    <property type="match status" value="1"/>
</dbReference>
<dbReference type="PANTHER" id="PTHR43743:SF1">
    <property type="entry name" value="POTASSIUM-TRANSPORTING ATPASE ATP-BINDING SUBUNIT"/>
    <property type="match status" value="1"/>
</dbReference>
<dbReference type="Pfam" id="PF00122">
    <property type="entry name" value="E1-E2_ATPase"/>
    <property type="match status" value="1"/>
</dbReference>
<dbReference type="Pfam" id="PF00702">
    <property type="entry name" value="Hydrolase"/>
    <property type="match status" value="1"/>
</dbReference>
<dbReference type="PRINTS" id="PR00119">
    <property type="entry name" value="CATATPASE"/>
</dbReference>
<dbReference type="SFLD" id="SFLDS00003">
    <property type="entry name" value="Haloacid_Dehalogenase"/>
    <property type="match status" value="1"/>
</dbReference>
<dbReference type="SFLD" id="SFLDF00027">
    <property type="entry name" value="p-type_atpase"/>
    <property type="match status" value="1"/>
</dbReference>
<dbReference type="SUPFAM" id="SSF81653">
    <property type="entry name" value="Calcium ATPase, transduction domain A"/>
    <property type="match status" value="1"/>
</dbReference>
<dbReference type="SUPFAM" id="SSF81665">
    <property type="entry name" value="Calcium ATPase, transmembrane domain M"/>
    <property type="match status" value="1"/>
</dbReference>
<dbReference type="SUPFAM" id="SSF56784">
    <property type="entry name" value="HAD-like"/>
    <property type="match status" value="1"/>
</dbReference>
<dbReference type="SUPFAM" id="SSF81660">
    <property type="entry name" value="Metal cation-transporting ATPase, ATP-binding domain N"/>
    <property type="match status" value="1"/>
</dbReference>
<dbReference type="PROSITE" id="PS00154">
    <property type="entry name" value="ATPASE_E1_E2"/>
    <property type="match status" value="1"/>
</dbReference>
<proteinExistence type="inferred from homology"/>
<accession>A7ZJ80</accession>